<accession>A0A0L1JF11</accession>
<protein>
    <recommendedName>
        <fullName evidence="5">Nonribosomal peptide synthetase rstn8</fullName>
        <ecNumber evidence="4">6.3.2.-</ecNumber>
    </recommendedName>
    <alternativeName>
        <fullName evidence="5">Restricticin biosynthesis cluster protein 8</fullName>
    </alternativeName>
</protein>
<dbReference type="EC" id="6.3.2.-" evidence="4"/>
<dbReference type="EMBL" id="JNOM01000015">
    <property type="protein sequence ID" value="KNG90370.1"/>
    <property type="molecule type" value="Genomic_DNA"/>
</dbReference>
<dbReference type="RefSeq" id="XP_015411293.1">
    <property type="nucleotide sequence ID" value="XM_015546704.1"/>
</dbReference>
<dbReference type="STRING" id="1509407.A0A0L1JF11"/>
<dbReference type="GeneID" id="26803251"/>
<dbReference type="OrthoDB" id="84107at5052"/>
<dbReference type="Proteomes" id="UP000037505">
    <property type="component" value="Unassembled WGS sequence"/>
</dbReference>
<dbReference type="GO" id="GO:0005737">
    <property type="term" value="C:cytoplasm"/>
    <property type="evidence" value="ECO:0007669"/>
    <property type="project" value="TreeGrafter"/>
</dbReference>
<dbReference type="GO" id="GO:0016874">
    <property type="term" value="F:ligase activity"/>
    <property type="evidence" value="ECO:0007669"/>
    <property type="project" value="UniProtKB-KW"/>
</dbReference>
<dbReference type="GO" id="GO:0031177">
    <property type="term" value="F:phosphopantetheine binding"/>
    <property type="evidence" value="ECO:0007669"/>
    <property type="project" value="InterPro"/>
</dbReference>
<dbReference type="GO" id="GO:0043041">
    <property type="term" value="P:amino acid activation for nonribosomal peptide biosynthetic process"/>
    <property type="evidence" value="ECO:0007669"/>
    <property type="project" value="TreeGrafter"/>
</dbReference>
<dbReference type="GO" id="GO:0044550">
    <property type="term" value="P:secondary metabolite biosynthetic process"/>
    <property type="evidence" value="ECO:0007669"/>
    <property type="project" value="TreeGrafter"/>
</dbReference>
<dbReference type="CDD" id="cd05918">
    <property type="entry name" value="A_NRPS_SidN3_like"/>
    <property type="match status" value="1"/>
</dbReference>
<dbReference type="CDD" id="cd19545">
    <property type="entry name" value="FUM14_C_NRPS-like"/>
    <property type="match status" value="1"/>
</dbReference>
<dbReference type="FunFam" id="3.30.300.30:FF:000015">
    <property type="entry name" value="Nonribosomal peptide synthase SidD"/>
    <property type="match status" value="1"/>
</dbReference>
<dbReference type="FunFam" id="1.10.1200.10:FF:000005">
    <property type="entry name" value="Nonribosomal peptide synthetase 1"/>
    <property type="match status" value="1"/>
</dbReference>
<dbReference type="FunFam" id="3.40.50.12780:FF:000014">
    <property type="entry name" value="Nonribosomal peptide synthetase 1"/>
    <property type="match status" value="1"/>
</dbReference>
<dbReference type="Gene3D" id="3.30.300.30">
    <property type="match status" value="1"/>
</dbReference>
<dbReference type="Gene3D" id="1.10.1200.10">
    <property type="entry name" value="ACP-like"/>
    <property type="match status" value="1"/>
</dbReference>
<dbReference type="Gene3D" id="3.30.559.10">
    <property type="entry name" value="Chloramphenicol acetyltransferase-like domain"/>
    <property type="match status" value="1"/>
</dbReference>
<dbReference type="Gene3D" id="3.40.50.12780">
    <property type="entry name" value="N-terminal domain of ligase-like"/>
    <property type="match status" value="1"/>
</dbReference>
<dbReference type="Gene3D" id="3.30.559.30">
    <property type="entry name" value="Nonribosomal peptide synthetase, condensation domain"/>
    <property type="match status" value="1"/>
</dbReference>
<dbReference type="InterPro" id="IPR010071">
    <property type="entry name" value="AA_adenyl_dom"/>
</dbReference>
<dbReference type="InterPro" id="IPR036736">
    <property type="entry name" value="ACP-like_sf"/>
</dbReference>
<dbReference type="InterPro" id="IPR045851">
    <property type="entry name" value="AMP-bd_C_sf"/>
</dbReference>
<dbReference type="InterPro" id="IPR020845">
    <property type="entry name" value="AMP-binding_CS"/>
</dbReference>
<dbReference type="InterPro" id="IPR000873">
    <property type="entry name" value="AMP-dep_synth/lig_dom"/>
</dbReference>
<dbReference type="InterPro" id="IPR042099">
    <property type="entry name" value="ANL_N_sf"/>
</dbReference>
<dbReference type="InterPro" id="IPR023213">
    <property type="entry name" value="CAT-like_dom_sf"/>
</dbReference>
<dbReference type="InterPro" id="IPR001242">
    <property type="entry name" value="Condensatn"/>
</dbReference>
<dbReference type="InterPro" id="IPR020806">
    <property type="entry name" value="PKS_PP-bd"/>
</dbReference>
<dbReference type="InterPro" id="IPR009081">
    <property type="entry name" value="PP-bd_ACP"/>
</dbReference>
<dbReference type="InterPro" id="IPR006162">
    <property type="entry name" value="Ppantetheine_attach_site"/>
</dbReference>
<dbReference type="NCBIfam" id="TIGR01733">
    <property type="entry name" value="AA-adenyl-dom"/>
    <property type="match status" value="1"/>
</dbReference>
<dbReference type="PANTHER" id="PTHR45527:SF1">
    <property type="entry name" value="FATTY ACID SYNTHASE"/>
    <property type="match status" value="1"/>
</dbReference>
<dbReference type="PANTHER" id="PTHR45527">
    <property type="entry name" value="NONRIBOSOMAL PEPTIDE SYNTHETASE"/>
    <property type="match status" value="1"/>
</dbReference>
<dbReference type="Pfam" id="PF00501">
    <property type="entry name" value="AMP-binding"/>
    <property type="match status" value="1"/>
</dbReference>
<dbReference type="Pfam" id="PF00668">
    <property type="entry name" value="Condensation"/>
    <property type="match status" value="1"/>
</dbReference>
<dbReference type="Pfam" id="PF00550">
    <property type="entry name" value="PP-binding"/>
    <property type="match status" value="1"/>
</dbReference>
<dbReference type="SMART" id="SM00823">
    <property type="entry name" value="PKS_PP"/>
    <property type="match status" value="1"/>
</dbReference>
<dbReference type="SUPFAM" id="SSF56801">
    <property type="entry name" value="Acetyl-CoA synthetase-like"/>
    <property type="match status" value="1"/>
</dbReference>
<dbReference type="SUPFAM" id="SSF47336">
    <property type="entry name" value="ACP-like"/>
    <property type="match status" value="1"/>
</dbReference>
<dbReference type="SUPFAM" id="SSF52777">
    <property type="entry name" value="CoA-dependent acyltransferases"/>
    <property type="match status" value="3"/>
</dbReference>
<dbReference type="PROSITE" id="PS00455">
    <property type="entry name" value="AMP_BINDING"/>
    <property type="match status" value="1"/>
</dbReference>
<dbReference type="PROSITE" id="PS50075">
    <property type="entry name" value="CARRIER"/>
    <property type="match status" value="1"/>
</dbReference>
<dbReference type="PROSITE" id="PS00012">
    <property type="entry name" value="PHOSPHOPANTETHEINE"/>
    <property type="match status" value="1"/>
</dbReference>
<proteinExistence type="inferred from homology"/>
<organism>
    <name type="scientific">Aspergillus nomiae NRRL (strain ATCC 15546 / NRRL 13137 / CBS 260.88 / M93)</name>
    <dbReference type="NCBI Taxonomy" id="1509407"/>
    <lineage>
        <taxon>Eukaryota</taxon>
        <taxon>Fungi</taxon>
        <taxon>Dikarya</taxon>
        <taxon>Ascomycota</taxon>
        <taxon>Pezizomycotina</taxon>
        <taxon>Eurotiomycetes</taxon>
        <taxon>Eurotiomycetidae</taxon>
        <taxon>Eurotiales</taxon>
        <taxon>Aspergillaceae</taxon>
        <taxon>Aspergillus</taxon>
        <taxon>Aspergillus subgen. Circumdati</taxon>
    </lineage>
</organism>
<keyword id="KW-0436">Ligase</keyword>
<keyword id="KW-0596">Phosphopantetheine</keyword>
<keyword id="KW-0597">Phosphoprotein</keyword>
<keyword id="KW-1185">Reference proteome</keyword>
<evidence type="ECO:0000255" key="1"/>
<evidence type="ECO:0000255" key="2">
    <source>
        <dbReference type="PROSITE-ProRule" id="PRU00258"/>
    </source>
</evidence>
<evidence type="ECO:0000256" key="3">
    <source>
        <dbReference type="SAM" id="MobiDB-lite"/>
    </source>
</evidence>
<evidence type="ECO:0000269" key="4">
    <source>
    </source>
</evidence>
<evidence type="ECO:0000303" key="5">
    <source>
    </source>
</evidence>
<evidence type="ECO:0000305" key="6"/>
<evidence type="ECO:0000305" key="7">
    <source>
    </source>
</evidence>
<comment type="function">
    <text evidence="4">Nonribosomal peptide synthetase; part of the gene cluster that mediates the biosynthesis of the tetrahydropyranyl antifungal agent restricticin that acts as an inhibitor of CYP51 and blocks the ergosterol biosynthesis (PubMed:33857369). Within the pathway, rstn8 catalyzes the C3 esterification of restrictinol with glycine to yield restricticin. Rstn8 represents an example of the emerging class of single-module NRPS-like enzymes that perform esterification reactions. Rstn8 displays strict substrate specificity toward glycine as no other natural amino acid is accepted. Rstn8 does not recognize desmethylrestrictinol as a substrate, demonstrating that rstn1-catalyzed methylation, possibly protecting the C4-OH, must precede the final esterification step (PubMed:33857369). The highly reducing polyketide synthase rstn3, the short chain dehydrogenase rstn4, the cyclase rstn5, the FAD-dependent monooxygenase rstn6 and the enoylreductase rstn7 are required to generate the first stable intermediate desmethylrestrictinol. Rstn3 with rstn7 biosynthesize the first polyketide chain intermediate that is reduced by rstn4, followed by epoxidation by rstn6 before 6-endo cyclization via epoxide opening by rstn5 leads to desmethylrestrictinol. The methyltransferase rstn1 then catalyzes the C4 O-methylation of desmethylrestrictinol to produce restrictinol, and the nonribosomal peptide synthetase rstn8 catalyzes the C3 esterification of restrictinol with glycine that leads to restricticin (PubMed:33857369).</text>
</comment>
<comment type="catalytic activity">
    <reaction evidence="4">
        <text>restrictinol + glycine + H(+) = restricticin + H2O</text>
        <dbReference type="Rhea" id="RHEA:81535"/>
        <dbReference type="ChEBI" id="CHEBI:15377"/>
        <dbReference type="ChEBI" id="CHEBI:15378"/>
        <dbReference type="ChEBI" id="CHEBI:57305"/>
        <dbReference type="ChEBI" id="CHEBI:231923"/>
        <dbReference type="ChEBI" id="CHEBI:231924"/>
    </reaction>
    <physiologicalReaction direction="left-to-right" evidence="4">
        <dbReference type="Rhea" id="RHEA:81536"/>
    </physiologicalReaction>
</comment>
<comment type="cofactor">
    <cofactor evidence="2">
        <name>pantetheine 4'-phosphate</name>
        <dbReference type="ChEBI" id="CHEBI:47942"/>
    </cofactor>
</comment>
<comment type="pathway">
    <text evidence="4">Antifungal biosynthesis.</text>
</comment>
<comment type="domain">
    <text evidence="7">NRP synthetases are composed of discrete domains (adenylation (A), thiolation (T) or peptidyl carrier protein (PCP) and condensation (C) domains) which when grouped together are referred to as a single module. Each module is responsible for the recognition (via the A domain) and incorporation of a single amino acid into the growing peptide product. Thus, an NRP synthetase is generally composed of one or more modules and can terminate in a thioesterase domain (TE) that releases the newly synthesized peptide from the enzyme. Occasionally, methyltransferase domains (responsible for amino acid methylation) are present within the NRP synthetase. Rstn8 has the monomodular architecture A-T-C.</text>
</comment>
<comment type="similarity">
    <text evidence="6">Belongs to the NRP synthetase family.</text>
</comment>
<feature type="chain" id="PRO_0000461539" description="Nonribosomal peptide synthetase rstn8">
    <location>
        <begin position="1"/>
        <end position="1358"/>
    </location>
</feature>
<feature type="domain" description="Carrier" evidence="2">
    <location>
        <begin position="795"/>
        <end position="872"/>
    </location>
</feature>
<feature type="region of interest" description="Disordered" evidence="3">
    <location>
        <begin position="1"/>
        <end position="23"/>
    </location>
</feature>
<feature type="region of interest" description="Adenylation" evidence="1 7">
    <location>
        <begin position="261"/>
        <end position="659"/>
    </location>
</feature>
<feature type="region of interest" description="Condensation" evidence="1 7">
    <location>
        <begin position="909"/>
        <end position="1322"/>
    </location>
</feature>
<feature type="modified residue" description="O-(pantetheine 4'-phosphoryl)serine" evidence="2">
    <location>
        <position position="832"/>
    </location>
</feature>
<sequence>MSHSSHYSPVDSGMVPSSSSTEDHLSPTLSASIVLPAQLNPFAKAYDIPPSSIVQLGWALLLRCHLAIPSPCWSTIDDKTMPRGSDTHALQWESLHLEEGRSISWILQRWEDPSVHWYLSSDQLPGSKSPTLTTMLFLVKEYGLFDPVTPIDPGMGTIIYFYPSDEQPRLHISWNPDVVSSGHAFHLTRSLEHALQTIFLAPSVDIRDVNLFGIWDHQQLLQWNSYCPDPVDRLVQEMFQDVVAATPEASAVAAWDGELNYRELDRLSSRLAGVLQSDFGVVSETIVALCFEKSVWAIVAMLAVVKAGGAFLHIDPQHPPARHQAMIKSTASKLFLCSEQTRDTVVRSVPDCPSLVIHREMFAAQPDHAQQDTVISSGNLGPTNAAYVVCTSGSTGTPKAIVVEHVSLCSSVTAQAKAMDITAGSRVLQYAAYTFDVSIGDIFAALTHGACICIPSNWERAHDLSGAINRLGVNQACLTSTVASLLTPVEVPKLKKLTLGGEPATQQCINMWVDKVALKNIYGPAECTVWCIIQPDVSSGIAVSNIGHAIGARAWIVHPENHDRLMPIGAVGELLIEGPLVARGYLNDPVRTNAVFLAQPPIWLASFGPPPPRSRFYKTGDLARYGPGGALLFEGRKDTQVKLRGQRIELGEVEYRLHQALSDLSPSAAVELVHPKESTAPLLCAFITWDEGIDLDLQPAKPPLSACLTPNARKRFNHTVSLLQTEMERTLPAYMIPGLCIPVHKLPLTTSGKLDRKALRYFCTQHSLAFLSTFENNNVNSPTDGATDSFAAPLETVSPAESTLAQLWAQVLGRKTDSIGRKDNFLSLGGDSLAAMRLVNRAARDAQLTLTVADVFKCPVLADQASLVRPLVQTRNLVPFELMAPGDLQIEDLVAYVAEKCGVLHDQVEDIYPCTPLQDEMMRDSLSGDRTQMGQEVILLAEDLDIPRYLSACARVFQRFPILRTRFVQHSDRLIQVVIRENLGWQRPESLTEYVEADAKEAPALNKPLTRWALTSDSTHCILTMHHSIFDGISLGHILGAIYAVYQSIPLPPDSVSFAAFLAQINEHTSGLSDDSKQFWRSYLRPSPGSGDLPLPIVDSTYRPCANRGTQRLVTFQSGVVPALQQHGLTEATLIRGAWACTLAQLQTSSSTPSDVVFGTILTGRNLHLPGVDALVAPTLTHAPIRIRMSAASNEKPASFLARVQADATAMIPFEHDGMDRIRAIDAQVRAVCDQMQTLLVIQPIPEGLTSASTSPFPGPILSGPRVEAREMRHFHWYGLLVECTLLPTNGFFVRMCYDDKLFSSEDVERLLDDYSQALHELGGGLTEGEEVHLPTERKLDTLTLPGLVAPSGAEDMV</sequence>
<gene>
    <name evidence="5" type="primary">rstn8</name>
    <name type="ORF">ANOM_001447</name>
</gene>
<reference key="1">
    <citation type="journal article" date="2015" name="BMC Genomics">
        <title>Genomic sequence of the aflatoxigenic filamentous fungus Aspergillus nomius.</title>
        <authorList>
            <person name="Moore G.G."/>
            <person name="Mack B.M."/>
            <person name="Beltz S.B."/>
        </authorList>
    </citation>
    <scope>NUCLEOTIDE SEQUENCE [LARGE SCALE GENOMIC DNA]</scope>
    <source>
        <strain>ATCC 15546 / NRRL 13137 / CBS 260.88 / M93</strain>
    </source>
</reference>
<reference key="2">
    <citation type="journal article" date="2021" name="J. Am. Chem. Soc.">
        <title>Targeted genome mining reveals the biosynthetic gene clusters of natural product CYP51 inhibitors.</title>
        <authorList>
            <person name="Liu N."/>
            <person name="Abramyan E.D."/>
            <person name="Cheng W."/>
            <person name="Perlatti B."/>
            <person name="Harvey C.J.B."/>
            <person name="Bills G.F."/>
            <person name="Tang Y."/>
        </authorList>
    </citation>
    <scope>FUNCTION</scope>
    <scope>PATHWAY</scope>
</reference>
<name>RSTN8_ASPN3</name>